<sequence>MSDYKSTLNLPETGFPMRGDLAKREPGMLARWTDDDLYGIIRAAKKGKKTFILHDGPPYANGSIHIGHSVNKILKDIIVKSKGLSGYDSPYVPGWDCHGLPIELKVEQEYGKPGEKFTAAEFRAKCREYAATQVDGQRKDFIRLGVLGDWSHPYLTMDFKTEANIIRALGKIIGNGHLHKGAKPVHWCVDCRSALAEAEVEYYDKTSPSIDVAFQAVDQDALKAKFAVSNVNGPISLVIWTTTPWTLPANRAISIAPDFDYVLVQIDGQAVILAKDLVESVMQRIGVTDYTILGTVKGAELELLRFTHPFMGFDVPAILGDHVTLDAGTGAVHTAPGHGPDDYVIGQKYGLETANPVGPDGTYLPGTYPTLDGVNVFKANDIVVALLQEKGALLHVEKMQHSYPCCWRHKTPIIFRATPQWFVSMDQKGLRAQSLKEIKGVQWIPDWGQARIESMVANRPDWCISRQRTWGVPMSLFVHKDTEELHPRTLELMEEVAKRVEVDGIQAWWDLDAKEILGDEADQYVKVPDTLDVWFDSGSTHSSVVDVRPEFAGHAADMYLEGSDQHRGWFMSSLMISTAMKGKAPYRQVLTHGFTVDGQGRKMSKSIGNTVSPQDVMNKLGADILRLWVASTDYTGEMAVSDEILKRAADSYRRIRNTARFLLANLNGFDPAKDMVKPEEMVVLDRWAVGCAKAAQEDILKAYEAYDFHEVVQRLMRFCSVEMGSFYLDIIKDRQYTAKADSVARRSCQTALYHIAEALVRWMAPILSFTADEVWGYLPGEREKYVFTGEWYEGLFGLADSEAMNDAFWDELLKVRGEVNKVIEQARADKKVGGSLEAAVTLYAEPELAAKLTALGDELRFVLLTSGATVADYNDAPADAQQSEVLKGLKVALSKAEGEKCPRCWHYTQDVGKVAEHAEICGRCVSNVAGDGEKRKFA</sequence>
<gene>
    <name evidence="1" type="primary">ileS</name>
    <name type="ordered locus">ECIAI39_0027</name>
</gene>
<reference key="1">
    <citation type="journal article" date="2009" name="PLoS Genet.">
        <title>Organised genome dynamics in the Escherichia coli species results in highly diverse adaptive paths.</title>
        <authorList>
            <person name="Touchon M."/>
            <person name="Hoede C."/>
            <person name="Tenaillon O."/>
            <person name="Barbe V."/>
            <person name="Baeriswyl S."/>
            <person name="Bidet P."/>
            <person name="Bingen E."/>
            <person name="Bonacorsi S."/>
            <person name="Bouchier C."/>
            <person name="Bouvet O."/>
            <person name="Calteau A."/>
            <person name="Chiapello H."/>
            <person name="Clermont O."/>
            <person name="Cruveiller S."/>
            <person name="Danchin A."/>
            <person name="Diard M."/>
            <person name="Dossat C."/>
            <person name="Karoui M.E."/>
            <person name="Frapy E."/>
            <person name="Garry L."/>
            <person name="Ghigo J.M."/>
            <person name="Gilles A.M."/>
            <person name="Johnson J."/>
            <person name="Le Bouguenec C."/>
            <person name="Lescat M."/>
            <person name="Mangenot S."/>
            <person name="Martinez-Jehanne V."/>
            <person name="Matic I."/>
            <person name="Nassif X."/>
            <person name="Oztas S."/>
            <person name="Petit M.A."/>
            <person name="Pichon C."/>
            <person name="Rouy Z."/>
            <person name="Ruf C.S."/>
            <person name="Schneider D."/>
            <person name="Tourret J."/>
            <person name="Vacherie B."/>
            <person name="Vallenet D."/>
            <person name="Medigue C."/>
            <person name="Rocha E.P.C."/>
            <person name="Denamur E."/>
        </authorList>
    </citation>
    <scope>NUCLEOTIDE SEQUENCE [LARGE SCALE GENOMIC DNA]</scope>
    <source>
        <strain>IAI39 / ExPEC</strain>
    </source>
</reference>
<feature type="chain" id="PRO_1000189157" description="Isoleucine--tRNA ligase">
    <location>
        <begin position="1"/>
        <end position="938"/>
    </location>
</feature>
<feature type="short sequence motif" description="'HIGH' region">
    <location>
        <begin position="58"/>
        <end position="68"/>
    </location>
</feature>
<feature type="short sequence motif" description="'KMSKS' region">
    <location>
        <begin position="602"/>
        <end position="606"/>
    </location>
</feature>
<feature type="binding site" evidence="1">
    <location>
        <position position="561"/>
    </location>
    <ligand>
        <name>L-isoleucyl-5'-AMP</name>
        <dbReference type="ChEBI" id="CHEBI:178002"/>
    </ligand>
</feature>
<feature type="binding site" evidence="1">
    <location>
        <position position="605"/>
    </location>
    <ligand>
        <name>ATP</name>
        <dbReference type="ChEBI" id="CHEBI:30616"/>
    </ligand>
</feature>
<feature type="binding site" evidence="1">
    <location>
        <position position="901"/>
    </location>
    <ligand>
        <name>Zn(2+)</name>
        <dbReference type="ChEBI" id="CHEBI:29105"/>
    </ligand>
</feature>
<feature type="binding site" evidence="1">
    <location>
        <position position="904"/>
    </location>
    <ligand>
        <name>Zn(2+)</name>
        <dbReference type="ChEBI" id="CHEBI:29105"/>
    </ligand>
</feature>
<feature type="binding site" evidence="1">
    <location>
        <position position="921"/>
    </location>
    <ligand>
        <name>Zn(2+)</name>
        <dbReference type="ChEBI" id="CHEBI:29105"/>
    </ligand>
</feature>
<feature type="binding site" evidence="1">
    <location>
        <position position="924"/>
    </location>
    <ligand>
        <name>Zn(2+)</name>
        <dbReference type="ChEBI" id="CHEBI:29105"/>
    </ligand>
</feature>
<feature type="modified residue" description="N6-acetyllysine" evidence="1">
    <location>
        <position position="183"/>
    </location>
</feature>
<proteinExistence type="inferred from homology"/>
<organism>
    <name type="scientific">Escherichia coli O7:K1 (strain IAI39 / ExPEC)</name>
    <dbReference type="NCBI Taxonomy" id="585057"/>
    <lineage>
        <taxon>Bacteria</taxon>
        <taxon>Pseudomonadati</taxon>
        <taxon>Pseudomonadota</taxon>
        <taxon>Gammaproteobacteria</taxon>
        <taxon>Enterobacterales</taxon>
        <taxon>Enterobacteriaceae</taxon>
        <taxon>Escherichia</taxon>
    </lineage>
</organism>
<keyword id="KW-0007">Acetylation</keyword>
<keyword id="KW-0030">Aminoacyl-tRNA synthetase</keyword>
<keyword id="KW-0067">ATP-binding</keyword>
<keyword id="KW-0963">Cytoplasm</keyword>
<keyword id="KW-0436">Ligase</keyword>
<keyword id="KW-0479">Metal-binding</keyword>
<keyword id="KW-0547">Nucleotide-binding</keyword>
<keyword id="KW-0648">Protein biosynthesis</keyword>
<keyword id="KW-0862">Zinc</keyword>
<dbReference type="EC" id="6.1.1.5" evidence="1"/>
<dbReference type="EMBL" id="CU928164">
    <property type="protein sequence ID" value="CAR16168.1"/>
    <property type="molecule type" value="Genomic_DNA"/>
</dbReference>
<dbReference type="RefSeq" id="WP_001286881.1">
    <property type="nucleotide sequence ID" value="NC_011750.1"/>
</dbReference>
<dbReference type="RefSeq" id="YP_002406075.1">
    <property type="nucleotide sequence ID" value="NC_011750.1"/>
</dbReference>
<dbReference type="SMR" id="B7NHD0"/>
<dbReference type="STRING" id="585057.ECIAI39_0027"/>
<dbReference type="KEGG" id="ect:ECIAI39_0027"/>
<dbReference type="PATRIC" id="fig|585057.6.peg.28"/>
<dbReference type="HOGENOM" id="CLU_001493_7_1_6"/>
<dbReference type="Proteomes" id="UP000000749">
    <property type="component" value="Chromosome"/>
</dbReference>
<dbReference type="GO" id="GO:0005829">
    <property type="term" value="C:cytosol"/>
    <property type="evidence" value="ECO:0007669"/>
    <property type="project" value="TreeGrafter"/>
</dbReference>
<dbReference type="GO" id="GO:0002161">
    <property type="term" value="F:aminoacyl-tRNA deacylase activity"/>
    <property type="evidence" value="ECO:0007669"/>
    <property type="project" value="InterPro"/>
</dbReference>
<dbReference type="GO" id="GO:0005524">
    <property type="term" value="F:ATP binding"/>
    <property type="evidence" value="ECO:0007669"/>
    <property type="project" value="UniProtKB-UniRule"/>
</dbReference>
<dbReference type="GO" id="GO:0004822">
    <property type="term" value="F:isoleucine-tRNA ligase activity"/>
    <property type="evidence" value="ECO:0007669"/>
    <property type="project" value="UniProtKB-UniRule"/>
</dbReference>
<dbReference type="GO" id="GO:0000049">
    <property type="term" value="F:tRNA binding"/>
    <property type="evidence" value="ECO:0007669"/>
    <property type="project" value="InterPro"/>
</dbReference>
<dbReference type="GO" id="GO:0008270">
    <property type="term" value="F:zinc ion binding"/>
    <property type="evidence" value="ECO:0007669"/>
    <property type="project" value="UniProtKB-UniRule"/>
</dbReference>
<dbReference type="GO" id="GO:0006428">
    <property type="term" value="P:isoleucyl-tRNA aminoacylation"/>
    <property type="evidence" value="ECO:0007669"/>
    <property type="project" value="UniProtKB-UniRule"/>
</dbReference>
<dbReference type="CDD" id="cd07960">
    <property type="entry name" value="Anticodon_Ia_Ile_BEm"/>
    <property type="match status" value="1"/>
</dbReference>
<dbReference type="CDD" id="cd00818">
    <property type="entry name" value="IleRS_core"/>
    <property type="match status" value="1"/>
</dbReference>
<dbReference type="FunFam" id="1.10.730.20:FF:000001">
    <property type="entry name" value="Isoleucine--tRNA ligase"/>
    <property type="match status" value="1"/>
</dbReference>
<dbReference type="FunFam" id="3.40.50.620:FF:000042">
    <property type="entry name" value="Isoleucine--tRNA ligase"/>
    <property type="match status" value="1"/>
</dbReference>
<dbReference type="FunFam" id="3.40.50.620:FF:000048">
    <property type="entry name" value="Isoleucine--tRNA ligase"/>
    <property type="match status" value="1"/>
</dbReference>
<dbReference type="FunFam" id="3.90.740.10:FF:000002">
    <property type="entry name" value="Isoleucine--tRNA ligase"/>
    <property type="match status" value="1"/>
</dbReference>
<dbReference type="Gene3D" id="1.10.730.20">
    <property type="match status" value="1"/>
</dbReference>
<dbReference type="Gene3D" id="3.40.50.620">
    <property type="entry name" value="HUPs"/>
    <property type="match status" value="2"/>
</dbReference>
<dbReference type="Gene3D" id="3.90.740.10">
    <property type="entry name" value="Valyl/Leucyl/Isoleucyl-tRNA synthetase, editing domain"/>
    <property type="match status" value="1"/>
</dbReference>
<dbReference type="HAMAP" id="MF_02002">
    <property type="entry name" value="Ile_tRNA_synth_type1"/>
    <property type="match status" value="1"/>
</dbReference>
<dbReference type="InterPro" id="IPR001412">
    <property type="entry name" value="aa-tRNA-synth_I_CS"/>
</dbReference>
<dbReference type="InterPro" id="IPR002300">
    <property type="entry name" value="aa-tRNA-synth_Ia"/>
</dbReference>
<dbReference type="InterPro" id="IPR033708">
    <property type="entry name" value="Anticodon_Ile_BEm"/>
</dbReference>
<dbReference type="InterPro" id="IPR002301">
    <property type="entry name" value="Ile-tRNA-ligase"/>
</dbReference>
<dbReference type="InterPro" id="IPR023585">
    <property type="entry name" value="Ile-tRNA-ligase_type1"/>
</dbReference>
<dbReference type="InterPro" id="IPR050081">
    <property type="entry name" value="Ile-tRNA_ligase"/>
</dbReference>
<dbReference type="InterPro" id="IPR013155">
    <property type="entry name" value="M/V/L/I-tRNA-synth_anticd-bd"/>
</dbReference>
<dbReference type="InterPro" id="IPR014729">
    <property type="entry name" value="Rossmann-like_a/b/a_fold"/>
</dbReference>
<dbReference type="InterPro" id="IPR009080">
    <property type="entry name" value="tRNAsynth_Ia_anticodon-bd"/>
</dbReference>
<dbReference type="InterPro" id="IPR009008">
    <property type="entry name" value="Val/Leu/Ile-tRNA-synth_edit"/>
</dbReference>
<dbReference type="InterPro" id="IPR010663">
    <property type="entry name" value="Znf_FPG/IleRS"/>
</dbReference>
<dbReference type="NCBIfam" id="TIGR00392">
    <property type="entry name" value="ileS"/>
    <property type="match status" value="1"/>
</dbReference>
<dbReference type="PANTHER" id="PTHR42765:SF1">
    <property type="entry name" value="ISOLEUCINE--TRNA LIGASE, MITOCHONDRIAL"/>
    <property type="match status" value="1"/>
</dbReference>
<dbReference type="PANTHER" id="PTHR42765">
    <property type="entry name" value="SOLEUCYL-TRNA SYNTHETASE"/>
    <property type="match status" value="1"/>
</dbReference>
<dbReference type="Pfam" id="PF08264">
    <property type="entry name" value="Anticodon_1"/>
    <property type="match status" value="1"/>
</dbReference>
<dbReference type="Pfam" id="PF00133">
    <property type="entry name" value="tRNA-synt_1"/>
    <property type="match status" value="1"/>
</dbReference>
<dbReference type="Pfam" id="PF06827">
    <property type="entry name" value="zf-FPG_IleRS"/>
    <property type="match status" value="1"/>
</dbReference>
<dbReference type="PRINTS" id="PR00984">
    <property type="entry name" value="TRNASYNTHILE"/>
</dbReference>
<dbReference type="SUPFAM" id="SSF47323">
    <property type="entry name" value="Anticodon-binding domain of a subclass of class I aminoacyl-tRNA synthetases"/>
    <property type="match status" value="1"/>
</dbReference>
<dbReference type="SUPFAM" id="SSF52374">
    <property type="entry name" value="Nucleotidylyl transferase"/>
    <property type="match status" value="1"/>
</dbReference>
<dbReference type="SUPFAM" id="SSF50677">
    <property type="entry name" value="ValRS/IleRS/LeuRS editing domain"/>
    <property type="match status" value="1"/>
</dbReference>
<dbReference type="PROSITE" id="PS00178">
    <property type="entry name" value="AA_TRNA_LIGASE_I"/>
    <property type="match status" value="1"/>
</dbReference>
<protein>
    <recommendedName>
        <fullName evidence="1">Isoleucine--tRNA ligase</fullName>
        <ecNumber evidence="1">6.1.1.5</ecNumber>
    </recommendedName>
    <alternativeName>
        <fullName evidence="1">Isoleucyl-tRNA synthetase</fullName>
        <shortName evidence="1">IleRS</shortName>
    </alternativeName>
</protein>
<accession>B7NHD0</accession>
<comment type="function">
    <text evidence="1">Catalyzes the attachment of isoleucine to tRNA(Ile). As IleRS can inadvertently accommodate and process structurally similar amino acids such as valine, to avoid such errors it has two additional distinct tRNA(Ile)-dependent editing activities. One activity is designated as 'pretransfer' editing and involves the hydrolysis of activated Val-AMP. The other activity is designated 'posttransfer' editing and involves deacylation of mischarged Val-tRNA(Ile).</text>
</comment>
<comment type="catalytic activity">
    <reaction evidence="1">
        <text>tRNA(Ile) + L-isoleucine + ATP = L-isoleucyl-tRNA(Ile) + AMP + diphosphate</text>
        <dbReference type="Rhea" id="RHEA:11060"/>
        <dbReference type="Rhea" id="RHEA-COMP:9666"/>
        <dbReference type="Rhea" id="RHEA-COMP:9695"/>
        <dbReference type="ChEBI" id="CHEBI:30616"/>
        <dbReference type="ChEBI" id="CHEBI:33019"/>
        <dbReference type="ChEBI" id="CHEBI:58045"/>
        <dbReference type="ChEBI" id="CHEBI:78442"/>
        <dbReference type="ChEBI" id="CHEBI:78528"/>
        <dbReference type="ChEBI" id="CHEBI:456215"/>
        <dbReference type="EC" id="6.1.1.5"/>
    </reaction>
</comment>
<comment type="cofactor">
    <cofactor evidence="1">
        <name>Zn(2+)</name>
        <dbReference type="ChEBI" id="CHEBI:29105"/>
    </cofactor>
    <text evidence="1">Binds 1 zinc ion per subunit.</text>
</comment>
<comment type="subunit">
    <text evidence="1">Monomer.</text>
</comment>
<comment type="subcellular location">
    <subcellularLocation>
        <location evidence="1">Cytoplasm</location>
    </subcellularLocation>
</comment>
<comment type="domain">
    <text evidence="1">IleRS has two distinct active sites: one for aminoacylation and one for editing. The misactivated valine is translocated from the active site to the editing site, which sterically excludes the correctly activated isoleucine. The single editing site contains two valyl binding pockets, one specific for each substrate (Val-AMP or Val-tRNA(Ile)).</text>
</comment>
<comment type="similarity">
    <text evidence="1">Belongs to the class-I aminoacyl-tRNA synthetase family. IleS type 1 subfamily.</text>
</comment>
<evidence type="ECO:0000255" key="1">
    <source>
        <dbReference type="HAMAP-Rule" id="MF_02002"/>
    </source>
</evidence>
<name>SYI_ECO7I</name>